<protein>
    <recommendedName>
        <fullName evidence="1">Pyrokinin-5</fullName>
    </recommendedName>
    <alternativeName>
        <fullName evidence="1">FXPRL-amide</fullName>
    </alternativeName>
    <alternativeName>
        <fullName evidence="4">PerAu-Capa-PK</fullName>
    </alternativeName>
</protein>
<feature type="peptide" id="PRO_0000378709" description="Pyrokinin-5" evidence="3">
    <location>
        <begin position="1"/>
        <end position="17"/>
    </location>
</feature>
<feature type="modified residue" description="Leucine amide" evidence="3">
    <location>
        <position position="17"/>
    </location>
</feature>
<reference evidence="5" key="1">
    <citation type="journal article" date="2009" name="BMC Evol. Biol.">
        <title>A proteomic approach for studying insect phylogeny: CAPA peptides of ancient insect taxa (Dictyoptera, Blattoptera) as a test case.</title>
        <authorList>
            <person name="Roth S."/>
            <person name="Fromm B."/>
            <person name="Gaede G."/>
            <person name="Predel R."/>
        </authorList>
    </citation>
    <scope>PROTEIN SEQUENCE</scope>
    <scope>AMIDATION AT LEU-17</scope>
    <source>
        <tissue evidence="3">Abdominal perisympathetic organs</tissue>
    </source>
</reference>
<accession>P85702</accession>
<organism>
    <name type="scientific">Periplaneta australasiae</name>
    <name type="common">Australian cockroach</name>
    <name type="synonym">Blatta australasiae</name>
    <dbReference type="NCBI Taxonomy" id="36975"/>
    <lineage>
        <taxon>Eukaryota</taxon>
        <taxon>Metazoa</taxon>
        <taxon>Ecdysozoa</taxon>
        <taxon>Arthropoda</taxon>
        <taxon>Hexapoda</taxon>
        <taxon>Insecta</taxon>
        <taxon>Pterygota</taxon>
        <taxon>Neoptera</taxon>
        <taxon>Polyneoptera</taxon>
        <taxon>Dictyoptera</taxon>
        <taxon>Blattodea</taxon>
        <taxon>Blattoidea</taxon>
        <taxon>Blattidae</taxon>
        <taxon>Blattinae</taxon>
        <taxon>Periplaneta</taxon>
    </lineage>
</organism>
<dbReference type="GO" id="GO:0005576">
    <property type="term" value="C:extracellular region"/>
    <property type="evidence" value="ECO:0007669"/>
    <property type="project" value="UniProtKB-SubCell"/>
</dbReference>
<dbReference type="GO" id="GO:0005184">
    <property type="term" value="F:neuropeptide hormone activity"/>
    <property type="evidence" value="ECO:0007669"/>
    <property type="project" value="InterPro"/>
</dbReference>
<dbReference type="GO" id="GO:0007218">
    <property type="term" value="P:neuropeptide signaling pathway"/>
    <property type="evidence" value="ECO:0007669"/>
    <property type="project" value="UniProtKB-KW"/>
</dbReference>
<dbReference type="InterPro" id="IPR001484">
    <property type="entry name" value="Pyrokinin_CS"/>
</dbReference>
<dbReference type="PROSITE" id="PS00539">
    <property type="entry name" value="PYROKININ"/>
    <property type="match status" value="1"/>
</dbReference>
<comment type="function">
    <text evidence="1">Myoactive.</text>
</comment>
<comment type="subcellular location">
    <subcellularLocation>
        <location evidence="5">Secreted</location>
    </subcellularLocation>
</comment>
<comment type="similarity">
    <text evidence="2">Belongs to the pyrokinin family.</text>
</comment>
<evidence type="ECO:0000250" key="1">
    <source>
        <dbReference type="UniProtKB" id="P82617"/>
    </source>
</evidence>
<evidence type="ECO:0000255" key="2"/>
<evidence type="ECO:0000269" key="3">
    <source>
    </source>
</evidence>
<evidence type="ECO:0000303" key="4">
    <source>
    </source>
</evidence>
<evidence type="ECO:0000305" key="5"/>
<proteinExistence type="evidence at protein level"/>
<sequence>GGGGSGETSGMWFGPRL</sequence>
<keyword id="KW-0027">Amidation</keyword>
<keyword id="KW-0903">Direct protein sequencing</keyword>
<keyword id="KW-0527">Neuropeptide</keyword>
<keyword id="KW-0964">Secreted</keyword>
<name>PPK5_PERAU</name>